<sequence>MTDQTTTRRVLLKLSGESFGGGQMGVDPDVVSALAREIAEAAKTVEVAIVVGGGNFFRGAQLSQRGMDRGRADYMGMLGTVMNALALQDFLEQAGAATRVQSAISMTQVAEPYIPRRAVRHLEKGRIVIFGAGAGLPYFSTDTVAAQRALEIQAVEVLVAKNGVDGVYTGDPRTDPSATLLDTVTYQDALQRGLKVVDSTAFSLCMDNDMKMVVFGMEPGGNVTRAIRGERIGTIVSN</sequence>
<gene>
    <name evidence="1" type="primary">pyrH</name>
    <name type="ordered locus">CMM_1385</name>
</gene>
<dbReference type="EC" id="2.7.4.22" evidence="1"/>
<dbReference type="EMBL" id="AM711867">
    <property type="protein sequence ID" value="CAN01430.1"/>
    <property type="molecule type" value="Genomic_DNA"/>
</dbReference>
<dbReference type="RefSeq" id="WP_012038071.1">
    <property type="nucleotide sequence ID" value="NC_009480.1"/>
</dbReference>
<dbReference type="SMR" id="A5CQS6"/>
<dbReference type="GeneID" id="92947356"/>
<dbReference type="KEGG" id="cmi:CMM_1385"/>
<dbReference type="eggNOG" id="COG0528">
    <property type="taxonomic scope" value="Bacteria"/>
</dbReference>
<dbReference type="HOGENOM" id="CLU_033861_0_0_11"/>
<dbReference type="OrthoDB" id="9807458at2"/>
<dbReference type="UniPathway" id="UPA00159">
    <property type="reaction ID" value="UER00275"/>
</dbReference>
<dbReference type="Proteomes" id="UP000001564">
    <property type="component" value="Chromosome"/>
</dbReference>
<dbReference type="GO" id="GO:0005737">
    <property type="term" value="C:cytoplasm"/>
    <property type="evidence" value="ECO:0007669"/>
    <property type="project" value="UniProtKB-SubCell"/>
</dbReference>
<dbReference type="GO" id="GO:0005524">
    <property type="term" value="F:ATP binding"/>
    <property type="evidence" value="ECO:0007669"/>
    <property type="project" value="UniProtKB-KW"/>
</dbReference>
<dbReference type="GO" id="GO:0033862">
    <property type="term" value="F:UMP kinase activity"/>
    <property type="evidence" value="ECO:0007669"/>
    <property type="project" value="UniProtKB-EC"/>
</dbReference>
<dbReference type="GO" id="GO:0044210">
    <property type="term" value="P:'de novo' CTP biosynthetic process"/>
    <property type="evidence" value="ECO:0007669"/>
    <property type="project" value="UniProtKB-UniRule"/>
</dbReference>
<dbReference type="GO" id="GO:0006225">
    <property type="term" value="P:UDP biosynthetic process"/>
    <property type="evidence" value="ECO:0007669"/>
    <property type="project" value="TreeGrafter"/>
</dbReference>
<dbReference type="CDD" id="cd04254">
    <property type="entry name" value="AAK_UMPK-PyrH-Ec"/>
    <property type="match status" value="1"/>
</dbReference>
<dbReference type="FunFam" id="3.40.1160.10:FF:000001">
    <property type="entry name" value="Uridylate kinase"/>
    <property type="match status" value="1"/>
</dbReference>
<dbReference type="Gene3D" id="3.40.1160.10">
    <property type="entry name" value="Acetylglutamate kinase-like"/>
    <property type="match status" value="1"/>
</dbReference>
<dbReference type="HAMAP" id="MF_01220_B">
    <property type="entry name" value="PyrH_B"/>
    <property type="match status" value="1"/>
</dbReference>
<dbReference type="InterPro" id="IPR036393">
    <property type="entry name" value="AceGlu_kinase-like_sf"/>
</dbReference>
<dbReference type="InterPro" id="IPR001048">
    <property type="entry name" value="Asp/Glu/Uridylate_kinase"/>
</dbReference>
<dbReference type="InterPro" id="IPR011817">
    <property type="entry name" value="Uridylate_kinase"/>
</dbReference>
<dbReference type="InterPro" id="IPR015963">
    <property type="entry name" value="Uridylate_kinase_bac"/>
</dbReference>
<dbReference type="NCBIfam" id="TIGR02075">
    <property type="entry name" value="pyrH_bact"/>
    <property type="match status" value="1"/>
</dbReference>
<dbReference type="PANTHER" id="PTHR42833">
    <property type="entry name" value="URIDYLATE KINASE"/>
    <property type="match status" value="1"/>
</dbReference>
<dbReference type="PANTHER" id="PTHR42833:SF4">
    <property type="entry name" value="URIDYLATE KINASE PUMPKIN, CHLOROPLASTIC"/>
    <property type="match status" value="1"/>
</dbReference>
<dbReference type="Pfam" id="PF00696">
    <property type="entry name" value="AA_kinase"/>
    <property type="match status" value="1"/>
</dbReference>
<dbReference type="PIRSF" id="PIRSF005650">
    <property type="entry name" value="Uridylate_kin"/>
    <property type="match status" value="1"/>
</dbReference>
<dbReference type="SUPFAM" id="SSF53633">
    <property type="entry name" value="Carbamate kinase-like"/>
    <property type="match status" value="1"/>
</dbReference>
<name>PYRH_CLAM3</name>
<comment type="function">
    <text evidence="1">Catalyzes the reversible phosphorylation of UMP to UDP.</text>
</comment>
<comment type="catalytic activity">
    <reaction evidence="1">
        <text>UMP + ATP = UDP + ADP</text>
        <dbReference type="Rhea" id="RHEA:24400"/>
        <dbReference type="ChEBI" id="CHEBI:30616"/>
        <dbReference type="ChEBI" id="CHEBI:57865"/>
        <dbReference type="ChEBI" id="CHEBI:58223"/>
        <dbReference type="ChEBI" id="CHEBI:456216"/>
        <dbReference type="EC" id="2.7.4.22"/>
    </reaction>
</comment>
<comment type="activity regulation">
    <text evidence="1">Inhibited by UTP.</text>
</comment>
<comment type="pathway">
    <text evidence="1">Pyrimidine metabolism; CTP biosynthesis via de novo pathway; UDP from UMP (UMPK route): step 1/1.</text>
</comment>
<comment type="subunit">
    <text evidence="1">Homohexamer.</text>
</comment>
<comment type="subcellular location">
    <subcellularLocation>
        <location evidence="1">Cytoplasm</location>
    </subcellularLocation>
</comment>
<comment type="similarity">
    <text evidence="1">Belongs to the UMP kinase family.</text>
</comment>
<proteinExistence type="inferred from homology"/>
<reference key="1">
    <citation type="journal article" date="2008" name="J. Bacteriol.">
        <title>The genome sequence of the tomato-pathogenic actinomycete Clavibacter michiganensis subsp. michiganensis NCPPB382 reveals a large island involved in pathogenicity.</title>
        <authorList>
            <person name="Gartemann K.-H."/>
            <person name="Abt B."/>
            <person name="Bekel T."/>
            <person name="Burger A."/>
            <person name="Engemann J."/>
            <person name="Fluegel M."/>
            <person name="Gaigalat L."/>
            <person name="Goesmann A."/>
            <person name="Graefen I."/>
            <person name="Kalinowski J."/>
            <person name="Kaup O."/>
            <person name="Kirchner O."/>
            <person name="Krause L."/>
            <person name="Linke B."/>
            <person name="McHardy A."/>
            <person name="Meyer F."/>
            <person name="Pohle S."/>
            <person name="Rueckert C."/>
            <person name="Schneiker S."/>
            <person name="Zellermann E.-M."/>
            <person name="Puehler A."/>
            <person name="Eichenlaub R."/>
            <person name="Kaiser O."/>
            <person name="Bartels D."/>
        </authorList>
    </citation>
    <scope>NUCLEOTIDE SEQUENCE [LARGE SCALE GENOMIC DNA]</scope>
    <source>
        <strain>NCPPB 382</strain>
    </source>
</reference>
<protein>
    <recommendedName>
        <fullName evidence="1">Uridylate kinase</fullName>
        <shortName evidence="1">UK</shortName>
        <ecNumber evidence="1">2.7.4.22</ecNumber>
    </recommendedName>
    <alternativeName>
        <fullName evidence="1">Uridine monophosphate kinase</fullName>
        <shortName evidence="1">UMP kinase</shortName>
        <shortName evidence="1">UMPK</shortName>
    </alternativeName>
</protein>
<keyword id="KW-0067">ATP-binding</keyword>
<keyword id="KW-0963">Cytoplasm</keyword>
<keyword id="KW-0418">Kinase</keyword>
<keyword id="KW-0547">Nucleotide-binding</keyword>
<keyword id="KW-0665">Pyrimidine biosynthesis</keyword>
<keyword id="KW-0808">Transferase</keyword>
<organism>
    <name type="scientific">Clavibacter michiganensis subsp. michiganensis (strain NCPPB 382)</name>
    <dbReference type="NCBI Taxonomy" id="443906"/>
    <lineage>
        <taxon>Bacteria</taxon>
        <taxon>Bacillati</taxon>
        <taxon>Actinomycetota</taxon>
        <taxon>Actinomycetes</taxon>
        <taxon>Micrococcales</taxon>
        <taxon>Microbacteriaceae</taxon>
        <taxon>Clavibacter</taxon>
    </lineage>
</organism>
<feature type="chain" id="PRO_0000323826" description="Uridylate kinase">
    <location>
        <begin position="1"/>
        <end position="238"/>
    </location>
</feature>
<feature type="binding site" evidence="1">
    <location>
        <begin position="13"/>
        <end position="16"/>
    </location>
    <ligand>
        <name>ATP</name>
        <dbReference type="ChEBI" id="CHEBI:30616"/>
    </ligand>
</feature>
<feature type="binding site" evidence="1">
    <location>
        <position position="53"/>
    </location>
    <ligand>
        <name>UMP</name>
        <dbReference type="ChEBI" id="CHEBI:57865"/>
    </ligand>
</feature>
<feature type="binding site" evidence="1">
    <location>
        <position position="54"/>
    </location>
    <ligand>
        <name>ATP</name>
        <dbReference type="ChEBI" id="CHEBI:30616"/>
    </ligand>
</feature>
<feature type="binding site" evidence="1">
    <location>
        <position position="58"/>
    </location>
    <ligand>
        <name>ATP</name>
        <dbReference type="ChEBI" id="CHEBI:30616"/>
    </ligand>
</feature>
<feature type="binding site" evidence="1">
    <location>
        <position position="73"/>
    </location>
    <ligand>
        <name>UMP</name>
        <dbReference type="ChEBI" id="CHEBI:57865"/>
    </ligand>
</feature>
<feature type="binding site" evidence="1">
    <location>
        <begin position="134"/>
        <end position="141"/>
    </location>
    <ligand>
        <name>UMP</name>
        <dbReference type="ChEBI" id="CHEBI:57865"/>
    </ligand>
</feature>
<feature type="binding site" evidence="1">
    <location>
        <position position="162"/>
    </location>
    <ligand>
        <name>ATP</name>
        <dbReference type="ChEBI" id="CHEBI:30616"/>
    </ligand>
</feature>
<feature type="binding site" evidence="1">
    <location>
        <position position="168"/>
    </location>
    <ligand>
        <name>ATP</name>
        <dbReference type="ChEBI" id="CHEBI:30616"/>
    </ligand>
</feature>
<feature type="binding site" evidence="1">
    <location>
        <position position="171"/>
    </location>
    <ligand>
        <name>ATP</name>
        <dbReference type="ChEBI" id="CHEBI:30616"/>
    </ligand>
</feature>
<evidence type="ECO:0000255" key="1">
    <source>
        <dbReference type="HAMAP-Rule" id="MF_01220"/>
    </source>
</evidence>
<accession>A5CQS6</accession>